<name>RL331_BACCN</name>
<comment type="similarity">
    <text evidence="1">Belongs to the bacterial ribosomal protein bL33 family.</text>
</comment>
<evidence type="ECO:0000255" key="1">
    <source>
        <dbReference type="HAMAP-Rule" id="MF_00294"/>
    </source>
</evidence>
<protein>
    <recommendedName>
        <fullName evidence="1">Large ribosomal subunit protein bL33A</fullName>
    </recommendedName>
    <alternativeName>
        <fullName evidence="1">50S ribosomal protein L33 1</fullName>
    </alternativeName>
</protein>
<sequence>MRVNITLACTECGDRNYISKKNKRNNAERLELKKYCKRDKKSTLHRETK</sequence>
<dbReference type="EMBL" id="CP000764">
    <property type="protein sequence ID" value="ABS23221.1"/>
    <property type="molecule type" value="Genomic_DNA"/>
</dbReference>
<dbReference type="SMR" id="A7GSW3"/>
<dbReference type="STRING" id="315749.Bcer98_2994"/>
<dbReference type="GeneID" id="33898241"/>
<dbReference type="KEGG" id="bcy:Bcer98_2994"/>
<dbReference type="eggNOG" id="COG0267">
    <property type="taxonomic scope" value="Bacteria"/>
</dbReference>
<dbReference type="HOGENOM" id="CLU_190949_0_2_9"/>
<dbReference type="OrthoDB" id="197660at2"/>
<dbReference type="Proteomes" id="UP000002300">
    <property type="component" value="Chromosome"/>
</dbReference>
<dbReference type="GO" id="GO:0005737">
    <property type="term" value="C:cytoplasm"/>
    <property type="evidence" value="ECO:0007669"/>
    <property type="project" value="UniProtKB-ARBA"/>
</dbReference>
<dbReference type="GO" id="GO:1990904">
    <property type="term" value="C:ribonucleoprotein complex"/>
    <property type="evidence" value="ECO:0007669"/>
    <property type="project" value="UniProtKB-KW"/>
</dbReference>
<dbReference type="GO" id="GO:0005840">
    <property type="term" value="C:ribosome"/>
    <property type="evidence" value="ECO:0007669"/>
    <property type="project" value="UniProtKB-KW"/>
</dbReference>
<dbReference type="GO" id="GO:0003735">
    <property type="term" value="F:structural constituent of ribosome"/>
    <property type="evidence" value="ECO:0007669"/>
    <property type="project" value="InterPro"/>
</dbReference>
<dbReference type="GO" id="GO:0006412">
    <property type="term" value="P:translation"/>
    <property type="evidence" value="ECO:0007669"/>
    <property type="project" value="UniProtKB-UniRule"/>
</dbReference>
<dbReference type="Gene3D" id="2.20.28.120">
    <property type="entry name" value="Ribosomal protein L33"/>
    <property type="match status" value="1"/>
</dbReference>
<dbReference type="HAMAP" id="MF_00294">
    <property type="entry name" value="Ribosomal_bL33"/>
    <property type="match status" value="1"/>
</dbReference>
<dbReference type="InterPro" id="IPR001705">
    <property type="entry name" value="Ribosomal_bL33"/>
</dbReference>
<dbReference type="InterPro" id="IPR018264">
    <property type="entry name" value="Ribosomal_bL33_CS"/>
</dbReference>
<dbReference type="InterPro" id="IPR038584">
    <property type="entry name" value="Ribosomal_bL33_sf"/>
</dbReference>
<dbReference type="InterPro" id="IPR011332">
    <property type="entry name" value="Ribosomal_zn-bd"/>
</dbReference>
<dbReference type="NCBIfam" id="NF001764">
    <property type="entry name" value="PRK00504.1"/>
    <property type="match status" value="1"/>
</dbReference>
<dbReference type="NCBIfam" id="NF001860">
    <property type="entry name" value="PRK00595.1"/>
    <property type="match status" value="1"/>
</dbReference>
<dbReference type="NCBIfam" id="TIGR01023">
    <property type="entry name" value="rpmG_bact"/>
    <property type="match status" value="1"/>
</dbReference>
<dbReference type="PANTHER" id="PTHR43168">
    <property type="entry name" value="50S RIBOSOMAL PROTEIN L33, CHLOROPLASTIC"/>
    <property type="match status" value="1"/>
</dbReference>
<dbReference type="PANTHER" id="PTHR43168:SF2">
    <property type="entry name" value="LARGE RIBOSOMAL SUBUNIT PROTEIN BL33C"/>
    <property type="match status" value="1"/>
</dbReference>
<dbReference type="Pfam" id="PF00471">
    <property type="entry name" value="Ribosomal_L33"/>
    <property type="match status" value="1"/>
</dbReference>
<dbReference type="SUPFAM" id="SSF57829">
    <property type="entry name" value="Zn-binding ribosomal proteins"/>
    <property type="match status" value="1"/>
</dbReference>
<dbReference type="PROSITE" id="PS00582">
    <property type="entry name" value="RIBOSOMAL_L33"/>
    <property type="match status" value="1"/>
</dbReference>
<keyword id="KW-0687">Ribonucleoprotein</keyword>
<keyword id="KW-0689">Ribosomal protein</keyword>
<proteinExistence type="inferred from homology"/>
<organism>
    <name type="scientific">Bacillus cytotoxicus (strain DSM 22905 / CIP 110041 / 391-98 / NVH 391-98)</name>
    <dbReference type="NCBI Taxonomy" id="315749"/>
    <lineage>
        <taxon>Bacteria</taxon>
        <taxon>Bacillati</taxon>
        <taxon>Bacillota</taxon>
        <taxon>Bacilli</taxon>
        <taxon>Bacillales</taxon>
        <taxon>Bacillaceae</taxon>
        <taxon>Bacillus</taxon>
        <taxon>Bacillus cereus group</taxon>
    </lineage>
</organism>
<feature type="chain" id="PRO_0000356388" description="Large ribosomal subunit protein bL33A">
    <location>
        <begin position="1"/>
        <end position="49"/>
    </location>
</feature>
<gene>
    <name evidence="1" type="primary">rpmG1</name>
    <name type="ordered locus">Bcer98_2994</name>
</gene>
<accession>A7GSW3</accession>
<reference key="1">
    <citation type="journal article" date="2008" name="Chem. Biol. Interact.">
        <title>Extending the Bacillus cereus group genomics to putative food-borne pathogens of different toxicity.</title>
        <authorList>
            <person name="Lapidus A."/>
            <person name="Goltsman E."/>
            <person name="Auger S."/>
            <person name="Galleron N."/>
            <person name="Segurens B."/>
            <person name="Dossat C."/>
            <person name="Land M.L."/>
            <person name="Broussolle V."/>
            <person name="Brillard J."/>
            <person name="Guinebretiere M.-H."/>
            <person name="Sanchis V."/>
            <person name="Nguen-the C."/>
            <person name="Lereclus D."/>
            <person name="Richardson P."/>
            <person name="Wincker P."/>
            <person name="Weissenbach J."/>
            <person name="Ehrlich S.D."/>
            <person name="Sorokin A."/>
        </authorList>
    </citation>
    <scope>NUCLEOTIDE SEQUENCE [LARGE SCALE GENOMIC DNA]</scope>
    <source>
        <strain>DSM 22905 / CIP 110041 / 391-98 / NVH 391-98</strain>
    </source>
</reference>